<proteinExistence type="inferred from homology"/>
<name>RL3_MYCCT</name>
<protein>
    <recommendedName>
        <fullName evidence="1">Large ribosomal subunit protein uL3</fullName>
    </recommendedName>
    <alternativeName>
        <fullName evidence="2">50S ribosomal protein L3</fullName>
    </alternativeName>
</protein>
<reference key="1">
    <citation type="journal article" date="1987" name="Mol. Gen. Genet.">
        <title>The ribosomal protein gene cluster of Mycoplasma capricolum.</title>
        <authorList>
            <person name="Ohkubo S."/>
            <person name="Muto A."/>
            <person name="Kawauchi Y."/>
            <person name="Yamao F."/>
            <person name="Osawa S."/>
        </authorList>
    </citation>
    <scope>NUCLEOTIDE SEQUENCE [GENOMIC DNA]</scope>
</reference>
<reference key="2">
    <citation type="submission" date="2005-09" db="EMBL/GenBank/DDBJ databases">
        <authorList>
            <person name="Glass J.I."/>
            <person name="Lartigue C."/>
            <person name="Pfannkoch C."/>
            <person name="Baden-Tillson H."/>
            <person name="Smith H.O."/>
            <person name="Venter J.C."/>
            <person name="Roske K."/>
            <person name="Wise K.S."/>
            <person name="Calcutt M.J."/>
            <person name="Nelson W.C."/>
            <person name="Nierman W.C."/>
        </authorList>
    </citation>
    <scope>NUCLEOTIDE SEQUENCE [LARGE SCALE GENOMIC DNA]</scope>
    <source>
        <strain>California kid / ATCC 27343 / NCTC 10154</strain>
    </source>
</reference>
<accession>P10134</accession>
<accession>Q2SRF3</accession>
<comment type="function">
    <text evidence="1">One of the primary rRNA binding proteins, it binds directly near the 3'-end of the 23S rRNA, where it nucleates assembly of the 50S subunit.</text>
</comment>
<comment type="subunit">
    <text evidence="1">Part of the 50S ribosomal subunit. Forms a cluster with proteins L14 and L19.</text>
</comment>
<comment type="similarity">
    <text evidence="1">Belongs to the universal ribosomal protein uL3 family.</text>
</comment>
<organism>
    <name type="scientific">Mycoplasma capricolum subsp. capricolum (strain California kid / ATCC 27343 / NCTC 10154)</name>
    <dbReference type="NCBI Taxonomy" id="340047"/>
    <lineage>
        <taxon>Bacteria</taxon>
        <taxon>Bacillati</taxon>
        <taxon>Mycoplasmatota</taxon>
        <taxon>Mollicutes</taxon>
        <taxon>Mycoplasmataceae</taxon>
        <taxon>Mycoplasma</taxon>
    </lineage>
</organism>
<gene>
    <name evidence="1" type="primary">rplC</name>
    <name type="ordered locus">MCAP_0696</name>
</gene>
<sequence>MKGILGRKVEMTQVFTNSGQLVPVTVVEVLPNTVLQVKTIDSDGYVAVQLGTTDKRVNLVNKPELGHFKKANSNPKRFVKEIRNMQGYEIGQVINVSDIFVSGEYVDVTGISKGKGFAGGIKRHNYSRGPMAHGSGYHRGIGSMGAIINRIFKSKKMPGHMGNAKRTIQNLEIIAIDQSNNIMLIKGSIPGPKNSFVQIKQNVKGMSSKQAVELLNRNASVQA</sequence>
<feature type="chain" id="PRO_0000077118" description="Large ribosomal subunit protein uL3">
    <location>
        <begin position="1"/>
        <end position="223"/>
    </location>
</feature>
<feature type="sequence conflict" description="In Ref. 1; CAA29704." evidence="2" ref="1">
    <original>S</original>
    <variation>P</variation>
    <location>
        <position position="188"/>
    </location>
</feature>
<evidence type="ECO:0000255" key="1">
    <source>
        <dbReference type="HAMAP-Rule" id="MF_01325"/>
    </source>
</evidence>
<evidence type="ECO:0000305" key="2"/>
<dbReference type="EMBL" id="X06414">
    <property type="protein sequence ID" value="CAA29704.1"/>
    <property type="molecule type" value="Genomic_DNA"/>
</dbReference>
<dbReference type="EMBL" id="CP000123">
    <property type="protein sequence ID" value="ABC01734.1"/>
    <property type="molecule type" value="Genomic_DNA"/>
</dbReference>
<dbReference type="PIR" id="S02831">
    <property type="entry name" value="R5YM3C"/>
</dbReference>
<dbReference type="RefSeq" id="WP_011387544.1">
    <property type="nucleotide sequence ID" value="NC_007633.1"/>
</dbReference>
<dbReference type="SMR" id="P10134"/>
<dbReference type="GeneID" id="23778350"/>
<dbReference type="KEGG" id="mcp:MCAP_0696"/>
<dbReference type="HOGENOM" id="CLU_044142_4_0_14"/>
<dbReference type="PhylomeDB" id="P10134"/>
<dbReference type="Proteomes" id="UP000001928">
    <property type="component" value="Chromosome"/>
</dbReference>
<dbReference type="GO" id="GO:0022625">
    <property type="term" value="C:cytosolic large ribosomal subunit"/>
    <property type="evidence" value="ECO:0007669"/>
    <property type="project" value="TreeGrafter"/>
</dbReference>
<dbReference type="GO" id="GO:0019843">
    <property type="term" value="F:rRNA binding"/>
    <property type="evidence" value="ECO:0007669"/>
    <property type="project" value="UniProtKB-UniRule"/>
</dbReference>
<dbReference type="GO" id="GO:0003735">
    <property type="term" value="F:structural constituent of ribosome"/>
    <property type="evidence" value="ECO:0007669"/>
    <property type="project" value="InterPro"/>
</dbReference>
<dbReference type="GO" id="GO:0006412">
    <property type="term" value="P:translation"/>
    <property type="evidence" value="ECO:0007669"/>
    <property type="project" value="UniProtKB-UniRule"/>
</dbReference>
<dbReference type="FunFam" id="2.40.30.10:FF:000004">
    <property type="entry name" value="50S ribosomal protein L3"/>
    <property type="match status" value="1"/>
</dbReference>
<dbReference type="FunFam" id="3.30.160.810:FF:000001">
    <property type="entry name" value="50S ribosomal protein L3"/>
    <property type="match status" value="1"/>
</dbReference>
<dbReference type="Gene3D" id="3.30.160.810">
    <property type="match status" value="1"/>
</dbReference>
<dbReference type="Gene3D" id="2.40.30.10">
    <property type="entry name" value="Translation factors"/>
    <property type="match status" value="1"/>
</dbReference>
<dbReference type="HAMAP" id="MF_01325_B">
    <property type="entry name" value="Ribosomal_uL3_B"/>
    <property type="match status" value="1"/>
</dbReference>
<dbReference type="InterPro" id="IPR000597">
    <property type="entry name" value="Ribosomal_uL3"/>
</dbReference>
<dbReference type="InterPro" id="IPR019927">
    <property type="entry name" value="Ribosomal_uL3_bac/org-type"/>
</dbReference>
<dbReference type="InterPro" id="IPR019926">
    <property type="entry name" value="Ribosomal_uL3_CS"/>
</dbReference>
<dbReference type="InterPro" id="IPR009000">
    <property type="entry name" value="Transl_B-barrel_sf"/>
</dbReference>
<dbReference type="NCBIfam" id="TIGR03625">
    <property type="entry name" value="L3_bact"/>
    <property type="match status" value="1"/>
</dbReference>
<dbReference type="PANTHER" id="PTHR11229">
    <property type="entry name" value="50S RIBOSOMAL PROTEIN L3"/>
    <property type="match status" value="1"/>
</dbReference>
<dbReference type="PANTHER" id="PTHR11229:SF16">
    <property type="entry name" value="LARGE RIBOSOMAL SUBUNIT PROTEIN UL3C"/>
    <property type="match status" value="1"/>
</dbReference>
<dbReference type="Pfam" id="PF00297">
    <property type="entry name" value="Ribosomal_L3"/>
    <property type="match status" value="1"/>
</dbReference>
<dbReference type="SUPFAM" id="SSF50447">
    <property type="entry name" value="Translation proteins"/>
    <property type="match status" value="1"/>
</dbReference>
<dbReference type="PROSITE" id="PS00474">
    <property type="entry name" value="RIBOSOMAL_L3"/>
    <property type="match status" value="1"/>
</dbReference>
<keyword id="KW-0687">Ribonucleoprotein</keyword>
<keyword id="KW-0689">Ribosomal protein</keyword>
<keyword id="KW-0694">RNA-binding</keyword>
<keyword id="KW-0699">rRNA-binding</keyword>